<proteinExistence type="inferred from homology"/>
<organism>
    <name type="scientific">Parasynechococcus marenigrum (strain WH8102)</name>
    <dbReference type="NCBI Taxonomy" id="84588"/>
    <lineage>
        <taxon>Bacteria</taxon>
        <taxon>Bacillati</taxon>
        <taxon>Cyanobacteriota</taxon>
        <taxon>Cyanophyceae</taxon>
        <taxon>Synechococcales</taxon>
        <taxon>Prochlorococcaceae</taxon>
        <taxon>Parasynechococcus</taxon>
        <taxon>Parasynechococcus marenigrum</taxon>
    </lineage>
</organism>
<feature type="chain" id="PRO_0000141217" description="Ribose-phosphate pyrophosphokinase">
    <location>
        <begin position="1"/>
        <end position="331"/>
    </location>
</feature>
<feature type="active site" evidence="1">
    <location>
        <position position="211"/>
    </location>
</feature>
<feature type="binding site" evidence="1">
    <location>
        <begin position="55"/>
        <end position="57"/>
    </location>
    <ligand>
        <name>ATP</name>
        <dbReference type="ChEBI" id="CHEBI:30616"/>
    </ligand>
</feature>
<feature type="binding site" evidence="1">
    <location>
        <position position="148"/>
    </location>
    <ligand>
        <name>Mg(2+)</name>
        <dbReference type="ChEBI" id="CHEBI:18420"/>
        <label>1</label>
    </ligand>
</feature>
<feature type="binding site" evidence="1">
    <location>
        <position position="187"/>
    </location>
    <ligand>
        <name>Mg(2+)</name>
        <dbReference type="ChEBI" id="CHEBI:18420"/>
        <label>2</label>
    </ligand>
</feature>
<feature type="binding site" evidence="1">
    <location>
        <position position="213"/>
    </location>
    <ligand>
        <name>D-ribose 5-phosphate</name>
        <dbReference type="ChEBI" id="CHEBI:78346"/>
    </ligand>
</feature>
<feature type="binding site" evidence="1">
    <location>
        <position position="237"/>
    </location>
    <ligand>
        <name>D-ribose 5-phosphate</name>
        <dbReference type="ChEBI" id="CHEBI:78346"/>
    </ligand>
</feature>
<feature type="binding site" evidence="1">
    <location>
        <begin position="241"/>
        <end position="245"/>
    </location>
    <ligand>
        <name>D-ribose 5-phosphate</name>
        <dbReference type="ChEBI" id="CHEBI:78346"/>
    </ligand>
</feature>
<comment type="function">
    <text evidence="1">Involved in the biosynthesis of the central metabolite phospho-alpha-D-ribosyl-1-pyrophosphate (PRPP) via the transfer of pyrophosphoryl group from ATP to 1-hydroxyl of ribose-5-phosphate (Rib-5-P).</text>
</comment>
<comment type="catalytic activity">
    <reaction evidence="1">
        <text>D-ribose 5-phosphate + ATP = 5-phospho-alpha-D-ribose 1-diphosphate + AMP + H(+)</text>
        <dbReference type="Rhea" id="RHEA:15609"/>
        <dbReference type="ChEBI" id="CHEBI:15378"/>
        <dbReference type="ChEBI" id="CHEBI:30616"/>
        <dbReference type="ChEBI" id="CHEBI:58017"/>
        <dbReference type="ChEBI" id="CHEBI:78346"/>
        <dbReference type="ChEBI" id="CHEBI:456215"/>
        <dbReference type="EC" id="2.7.6.1"/>
    </reaction>
</comment>
<comment type="cofactor">
    <cofactor evidence="1">
        <name>Mg(2+)</name>
        <dbReference type="ChEBI" id="CHEBI:18420"/>
    </cofactor>
    <text evidence="1">Binds 2 Mg(2+) ions per subunit.</text>
</comment>
<comment type="pathway">
    <text evidence="1">Metabolic intermediate biosynthesis; 5-phospho-alpha-D-ribose 1-diphosphate biosynthesis; 5-phospho-alpha-D-ribose 1-diphosphate from D-ribose 5-phosphate (route I): step 1/1.</text>
</comment>
<comment type="subunit">
    <text evidence="1">Homohexamer.</text>
</comment>
<comment type="subcellular location">
    <subcellularLocation>
        <location evidence="1">Cytoplasm</location>
    </subcellularLocation>
</comment>
<comment type="similarity">
    <text evidence="1">Belongs to the ribose-phosphate pyrophosphokinase family. Class I subfamily.</text>
</comment>
<protein>
    <recommendedName>
        <fullName evidence="1">Ribose-phosphate pyrophosphokinase</fullName>
        <shortName evidence="1">RPPK</shortName>
        <ecNumber evidence="1">2.7.6.1</ecNumber>
    </recommendedName>
    <alternativeName>
        <fullName evidence="1">5-phospho-D-ribosyl alpha-1-diphosphate synthase</fullName>
    </alternativeName>
    <alternativeName>
        <fullName evidence="1">Phosphoribosyl diphosphate synthase</fullName>
    </alternativeName>
    <alternativeName>
        <fullName evidence="1">Phosphoribosyl pyrophosphate synthase</fullName>
        <shortName evidence="1">P-Rib-PP synthase</shortName>
        <shortName evidence="1">PRPP synthase</shortName>
        <shortName evidence="1">PRPPase</shortName>
    </alternativeName>
</protein>
<sequence length="331" mass="36072">MTSFLTAARAEQEKLTPDTRRLRLFSGTSNPGLAREIAAYLGVPDGPRVCKRFADGELYVQIQESIRGCDVFLIQPTCAPVNDHLMELLIMVDACRRASARQITAVVPYYGYARADRKTAGRESITAKLTANLLVKSGVDRVLAMDLHSAQIQGYFDIPCDHIYGSPVLVDYLSTQNLDDIVVVSPDVGGVARARAFAKQMNDAPLAIIDKRRTGHNLAESLTVIGDVSGRTAILIDDMIDTGGTICAGARLLRQQGAKRVIACATHAVFSPPASERLSADGLFEQVVVTNSIPIQQERTFPQLQVLSVANMLGEAIWRIHEESSVSSMFR</sequence>
<evidence type="ECO:0000255" key="1">
    <source>
        <dbReference type="HAMAP-Rule" id="MF_00583"/>
    </source>
</evidence>
<name>KPRS_PARMW</name>
<dbReference type="EC" id="2.7.6.1" evidence="1"/>
<dbReference type="EMBL" id="BX569691">
    <property type="protein sequence ID" value="CAE07481.1"/>
    <property type="molecule type" value="Genomic_DNA"/>
</dbReference>
<dbReference type="RefSeq" id="WP_011127831.1">
    <property type="nucleotide sequence ID" value="NC_005070.1"/>
</dbReference>
<dbReference type="SMR" id="Q7U7L5"/>
<dbReference type="STRING" id="84588.SYNW0966"/>
<dbReference type="KEGG" id="syw:SYNW0966"/>
<dbReference type="eggNOG" id="COG0462">
    <property type="taxonomic scope" value="Bacteria"/>
</dbReference>
<dbReference type="HOGENOM" id="CLU_033546_7_0_3"/>
<dbReference type="UniPathway" id="UPA00087">
    <property type="reaction ID" value="UER00172"/>
</dbReference>
<dbReference type="Proteomes" id="UP000001422">
    <property type="component" value="Chromosome"/>
</dbReference>
<dbReference type="GO" id="GO:0005737">
    <property type="term" value="C:cytoplasm"/>
    <property type="evidence" value="ECO:0007669"/>
    <property type="project" value="UniProtKB-SubCell"/>
</dbReference>
<dbReference type="GO" id="GO:0002189">
    <property type="term" value="C:ribose phosphate diphosphokinase complex"/>
    <property type="evidence" value="ECO:0007669"/>
    <property type="project" value="TreeGrafter"/>
</dbReference>
<dbReference type="GO" id="GO:0005524">
    <property type="term" value="F:ATP binding"/>
    <property type="evidence" value="ECO:0007669"/>
    <property type="project" value="UniProtKB-KW"/>
</dbReference>
<dbReference type="GO" id="GO:0016301">
    <property type="term" value="F:kinase activity"/>
    <property type="evidence" value="ECO:0007669"/>
    <property type="project" value="UniProtKB-KW"/>
</dbReference>
<dbReference type="GO" id="GO:0000287">
    <property type="term" value="F:magnesium ion binding"/>
    <property type="evidence" value="ECO:0007669"/>
    <property type="project" value="UniProtKB-UniRule"/>
</dbReference>
<dbReference type="GO" id="GO:0004749">
    <property type="term" value="F:ribose phosphate diphosphokinase activity"/>
    <property type="evidence" value="ECO:0007669"/>
    <property type="project" value="UniProtKB-UniRule"/>
</dbReference>
<dbReference type="GO" id="GO:0006015">
    <property type="term" value="P:5-phosphoribose 1-diphosphate biosynthetic process"/>
    <property type="evidence" value="ECO:0007669"/>
    <property type="project" value="UniProtKB-UniRule"/>
</dbReference>
<dbReference type="GO" id="GO:0006164">
    <property type="term" value="P:purine nucleotide biosynthetic process"/>
    <property type="evidence" value="ECO:0007669"/>
    <property type="project" value="TreeGrafter"/>
</dbReference>
<dbReference type="GO" id="GO:0009156">
    <property type="term" value="P:ribonucleoside monophosphate biosynthetic process"/>
    <property type="evidence" value="ECO:0007669"/>
    <property type="project" value="InterPro"/>
</dbReference>
<dbReference type="CDD" id="cd06223">
    <property type="entry name" value="PRTases_typeI"/>
    <property type="match status" value="1"/>
</dbReference>
<dbReference type="FunFam" id="3.40.50.2020:FF:000002">
    <property type="entry name" value="Ribose-phosphate pyrophosphokinase"/>
    <property type="match status" value="1"/>
</dbReference>
<dbReference type="FunFam" id="3.40.50.2020:FF:000014">
    <property type="entry name" value="Ribose-phosphate pyrophosphokinase 1"/>
    <property type="match status" value="1"/>
</dbReference>
<dbReference type="Gene3D" id="3.40.50.2020">
    <property type="match status" value="2"/>
</dbReference>
<dbReference type="HAMAP" id="MF_00583_B">
    <property type="entry name" value="RibP_PPkinase_B"/>
    <property type="match status" value="1"/>
</dbReference>
<dbReference type="InterPro" id="IPR000842">
    <property type="entry name" value="PRib_PP_synth_CS"/>
</dbReference>
<dbReference type="InterPro" id="IPR029099">
    <property type="entry name" value="Pribosyltran_N"/>
</dbReference>
<dbReference type="InterPro" id="IPR000836">
    <property type="entry name" value="PRibTrfase_dom"/>
</dbReference>
<dbReference type="InterPro" id="IPR029057">
    <property type="entry name" value="PRTase-like"/>
</dbReference>
<dbReference type="InterPro" id="IPR005946">
    <property type="entry name" value="Rib-P_diPkinase"/>
</dbReference>
<dbReference type="InterPro" id="IPR037515">
    <property type="entry name" value="Rib-P_diPkinase_bac"/>
</dbReference>
<dbReference type="NCBIfam" id="NF002320">
    <property type="entry name" value="PRK01259.1"/>
    <property type="match status" value="1"/>
</dbReference>
<dbReference type="NCBIfam" id="NF002758">
    <property type="entry name" value="PRK02812.1"/>
    <property type="match status" value="1"/>
</dbReference>
<dbReference type="NCBIfam" id="TIGR01251">
    <property type="entry name" value="ribP_PPkin"/>
    <property type="match status" value="1"/>
</dbReference>
<dbReference type="PANTHER" id="PTHR10210">
    <property type="entry name" value="RIBOSE-PHOSPHATE DIPHOSPHOKINASE FAMILY MEMBER"/>
    <property type="match status" value="1"/>
</dbReference>
<dbReference type="PANTHER" id="PTHR10210:SF41">
    <property type="entry name" value="RIBOSE-PHOSPHATE PYROPHOSPHOKINASE 1, CHLOROPLASTIC"/>
    <property type="match status" value="1"/>
</dbReference>
<dbReference type="Pfam" id="PF14572">
    <property type="entry name" value="Pribosyl_synth"/>
    <property type="match status" value="1"/>
</dbReference>
<dbReference type="Pfam" id="PF13793">
    <property type="entry name" value="Pribosyltran_N"/>
    <property type="match status" value="1"/>
</dbReference>
<dbReference type="SMART" id="SM01400">
    <property type="entry name" value="Pribosyltran_N"/>
    <property type="match status" value="1"/>
</dbReference>
<dbReference type="SUPFAM" id="SSF53271">
    <property type="entry name" value="PRTase-like"/>
    <property type="match status" value="1"/>
</dbReference>
<dbReference type="PROSITE" id="PS00114">
    <property type="entry name" value="PRPP_SYNTHASE"/>
    <property type="match status" value="1"/>
</dbReference>
<accession>Q7U7L5</accession>
<reference key="1">
    <citation type="journal article" date="2003" name="Nature">
        <title>The genome of a motile marine Synechococcus.</title>
        <authorList>
            <person name="Palenik B."/>
            <person name="Brahamsha B."/>
            <person name="Larimer F.W."/>
            <person name="Land M.L."/>
            <person name="Hauser L."/>
            <person name="Chain P."/>
            <person name="Lamerdin J.E."/>
            <person name="Regala W."/>
            <person name="Allen E.E."/>
            <person name="McCarren J."/>
            <person name="Paulsen I.T."/>
            <person name="Dufresne A."/>
            <person name="Partensky F."/>
            <person name="Webb E.A."/>
            <person name="Waterbury J."/>
        </authorList>
    </citation>
    <scope>NUCLEOTIDE SEQUENCE [LARGE SCALE GENOMIC DNA]</scope>
    <source>
        <strain>WH8102</strain>
    </source>
</reference>
<keyword id="KW-0067">ATP-binding</keyword>
<keyword id="KW-0963">Cytoplasm</keyword>
<keyword id="KW-0418">Kinase</keyword>
<keyword id="KW-0460">Magnesium</keyword>
<keyword id="KW-0479">Metal-binding</keyword>
<keyword id="KW-0545">Nucleotide biosynthesis</keyword>
<keyword id="KW-0547">Nucleotide-binding</keyword>
<keyword id="KW-0808">Transferase</keyword>
<gene>
    <name evidence="1" type="primary">prs</name>
    <name type="ordered locus">SYNW0966</name>
</gene>